<proteinExistence type="evidence at protein level"/>
<name>MK2A_PALPR</name>
<feature type="peptide" id="PRO_0000044161" description="Metalnikowin-2A">
    <location>
        <begin position="1"/>
        <end position="15"/>
    </location>
</feature>
<organism>
    <name type="scientific">Palomena prasina</name>
    <name type="common">Green shield bug</name>
    <name type="synonym">Cimex prasinus</name>
    <dbReference type="NCBI Taxonomy" id="55431"/>
    <lineage>
        <taxon>Eukaryota</taxon>
        <taxon>Metazoa</taxon>
        <taxon>Ecdysozoa</taxon>
        <taxon>Arthropoda</taxon>
        <taxon>Hexapoda</taxon>
        <taxon>Insecta</taxon>
        <taxon>Pterygota</taxon>
        <taxon>Neoptera</taxon>
        <taxon>Paraneoptera</taxon>
        <taxon>Hemiptera</taxon>
        <taxon>Heteroptera</taxon>
        <taxon>Panheteroptera</taxon>
        <taxon>Pentatomomorpha</taxon>
        <taxon>Pentatomoidea</taxon>
        <taxon>Pentatomidae</taxon>
        <taxon>Pentatominae</taxon>
        <taxon>Palomena</taxon>
    </lineage>
</organism>
<keyword id="KW-0044">Antibiotic</keyword>
<keyword id="KW-0929">Antimicrobial</keyword>
<keyword id="KW-0903">Direct protein sequencing</keyword>
<keyword id="KW-0391">Immunity</keyword>
<keyword id="KW-0399">Innate immunity</keyword>
<evidence type="ECO:0000269" key="1">
    <source ref="1"/>
</evidence>
<accession>P80409</accession>
<reference key="1">
    <citation type="journal article" date="1996" name="J. Insect Physiol.">
        <title>The inducible antibacterial peptides of the hemipteran insect Palomena prasina: identification of a unique family of proline-rich peptides and of a novel insect defensin.</title>
        <authorList>
            <person name="Chernysh S."/>
            <person name="Cociancich S."/>
            <person name="Briand J.-P."/>
            <person name="Hetru C."/>
            <person name="Bulet P."/>
        </authorList>
    </citation>
    <scope>PROTEIN SEQUENCE</scope>
    <scope>FUNCTION</scope>
    <scope>INDUCTION</scope>
    <scope>MASS SPECTROMETRY</scope>
    <source>
        <tissue>Hemolymph</tissue>
        <tissue>Larval hemolymph</tissue>
    </source>
</reference>
<sequence length="15" mass="1893">VDKPDYRPRPWPRPN</sequence>
<dbReference type="GO" id="GO:0005576">
    <property type="term" value="C:extracellular region"/>
    <property type="evidence" value="ECO:0000314"/>
    <property type="project" value="UniProtKB"/>
</dbReference>
<dbReference type="GO" id="GO:0050829">
    <property type="term" value="P:defense response to Gram-negative bacterium"/>
    <property type="evidence" value="ECO:0000270"/>
    <property type="project" value="UniProtKB"/>
</dbReference>
<dbReference type="GO" id="GO:0045087">
    <property type="term" value="P:innate immune response"/>
    <property type="evidence" value="ECO:0007669"/>
    <property type="project" value="UniProtKB-KW"/>
</dbReference>
<protein>
    <recommendedName>
        <fullName>Metalnikowin-2A</fullName>
    </recommendedName>
    <alternativeName>
        <fullName>Metalnikowin IIA</fullName>
    </alternativeName>
</protein>
<comment type="function">
    <text evidence="1">Antibacterial peptide active against Gram-negative bacteria.</text>
</comment>
<comment type="induction">
    <text evidence="1">By bacterial infection.</text>
</comment>
<comment type="mass spectrometry" mass="1893.3" error="0.1" method="Electrospray" evidence="1"/>